<feature type="chain" id="PRO_1000077798" description="UvrABC system protein C">
    <location>
        <begin position="1"/>
        <end position="600"/>
    </location>
</feature>
<feature type="domain" description="GIY-YIG" evidence="1">
    <location>
        <begin position="15"/>
        <end position="92"/>
    </location>
</feature>
<feature type="domain" description="UVR" evidence="1">
    <location>
        <begin position="197"/>
        <end position="232"/>
    </location>
</feature>
<comment type="function">
    <text evidence="1">The UvrABC repair system catalyzes the recognition and processing of DNA lesions. UvrC both incises the 5' and 3' sides of the lesion. The N-terminal half is responsible for the 3' incision and the C-terminal half is responsible for the 5' incision.</text>
</comment>
<comment type="subunit">
    <text evidence="1">Interacts with UvrB in an incision complex.</text>
</comment>
<comment type="subcellular location">
    <subcellularLocation>
        <location evidence="1">Cytoplasm</location>
    </subcellularLocation>
</comment>
<comment type="similarity">
    <text evidence="1">Belongs to the UvrC family.</text>
</comment>
<gene>
    <name evidence="1" type="primary">uvrC</name>
    <name type="ordered locus">LGAS_0871</name>
</gene>
<keyword id="KW-0963">Cytoplasm</keyword>
<keyword id="KW-0227">DNA damage</keyword>
<keyword id="KW-0228">DNA excision</keyword>
<keyword id="KW-0234">DNA repair</keyword>
<keyword id="KW-0267">Excision nuclease</keyword>
<keyword id="KW-0742">SOS response</keyword>
<name>UVRC_LACGA</name>
<protein>
    <recommendedName>
        <fullName evidence="1">UvrABC system protein C</fullName>
        <shortName evidence="1">Protein UvrC</shortName>
    </recommendedName>
    <alternativeName>
        <fullName evidence="1">Excinuclease ABC subunit C</fullName>
    </alternativeName>
</protein>
<sequence>MATEHIENKLKLLPDKPGCYLMKDINGNVIYVGKSKNLKNRVRSYFKSKQVGRRAELVREIRDFDIITVSSDKESFLLEITLIKKYQPYYNVQLKQGTGYPYIEITNERDPQTRLTSFVHKDHGYYFGPYPNVYAAQATLKFIQKVWPLRRCSGHQGRPCLYYHMGQCLGACFKEVPKSAYDKQIRKIKRFLNGDISQVKQDLTEKMTQASMNLEFERAAEFRDQLKYIEQTVEKQKIISNDHTQRDIFNFYVDKSWISIQVFFLRQAKLLRRETRLFPLTDTNEPQDAFVSFIAQFYGQRNRVLPKEVLVPAGIDNEALAEVLGVAVRTPQRGQKRALLEMAHDNAKLKLDEKFRLLELGNRKTKGAQKEIFDALGLPYGHRIESFDHSHIQGADPVSALVVFTDGEPDKHEYRKYKLKGEVEHQNAADEVGNTREVVRRRYSRLLKEHKKMPDLILMDGGQIQVDACLDVLRNELNVNIPVAGMVKDDHHRTNHLIFGDPTQGEELKLIPLNPKSEGFYLMTRIQDEVHRFAITFHRRTHAKNALSSKLDEIKGIGPKSRNKLLRKFGSLKKIKEASIEELRDAGLTLPQAQTVKLSL</sequence>
<organism>
    <name type="scientific">Lactobacillus gasseri (strain ATCC 33323 / DSM 20243 / BCRC 14619 / CIP 102991 / JCM 1131 / KCTC 3163 / NCIMB 11718 / NCTC 13722 / AM63)</name>
    <dbReference type="NCBI Taxonomy" id="324831"/>
    <lineage>
        <taxon>Bacteria</taxon>
        <taxon>Bacillati</taxon>
        <taxon>Bacillota</taxon>
        <taxon>Bacilli</taxon>
        <taxon>Lactobacillales</taxon>
        <taxon>Lactobacillaceae</taxon>
        <taxon>Lactobacillus</taxon>
    </lineage>
</organism>
<accession>Q043W2</accession>
<proteinExistence type="inferred from homology"/>
<dbReference type="EMBL" id="CP000413">
    <property type="protein sequence ID" value="ABJ60260.1"/>
    <property type="molecule type" value="Genomic_DNA"/>
</dbReference>
<dbReference type="RefSeq" id="WP_003650438.1">
    <property type="nucleotide sequence ID" value="NZ_WBMG01000010.1"/>
</dbReference>
<dbReference type="SMR" id="Q043W2"/>
<dbReference type="GeneID" id="29639076"/>
<dbReference type="KEGG" id="lga:LGAS_0871"/>
<dbReference type="HOGENOM" id="CLU_014841_3_2_9"/>
<dbReference type="BioCyc" id="LGAS324831:G1G6Y-864-MONOMER"/>
<dbReference type="Proteomes" id="UP000000664">
    <property type="component" value="Chromosome"/>
</dbReference>
<dbReference type="GO" id="GO:0005737">
    <property type="term" value="C:cytoplasm"/>
    <property type="evidence" value="ECO:0007669"/>
    <property type="project" value="UniProtKB-SubCell"/>
</dbReference>
<dbReference type="GO" id="GO:0009380">
    <property type="term" value="C:excinuclease repair complex"/>
    <property type="evidence" value="ECO:0007669"/>
    <property type="project" value="InterPro"/>
</dbReference>
<dbReference type="GO" id="GO:0003677">
    <property type="term" value="F:DNA binding"/>
    <property type="evidence" value="ECO:0007669"/>
    <property type="project" value="UniProtKB-UniRule"/>
</dbReference>
<dbReference type="GO" id="GO:0009381">
    <property type="term" value="F:excinuclease ABC activity"/>
    <property type="evidence" value="ECO:0007669"/>
    <property type="project" value="UniProtKB-UniRule"/>
</dbReference>
<dbReference type="GO" id="GO:0006289">
    <property type="term" value="P:nucleotide-excision repair"/>
    <property type="evidence" value="ECO:0007669"/>
    <property type="project" value="UniProtKB-UniRule"/>
</dbReference>
<dbReference type="GO" id="GO:0009432">
    <property type="term" value="P:SOS response"/>
    <property type="evidence" value="ECO:0007669"/>
    <property type="project" value="UniProtKB-UniRule"/>
</dbReference>
<dbReference type="CDD" id="cd10434">
    <property type="entry name" value="GIY-YIG_UvrC_Cho"/>
    <property type="match status" value="1"/>
</dbReference>
<dbReference type="FunFam" id="3.40.1440.10:FF:000001">
    <property type="entry name" value="UvrABC system protein C"/>
    <property type="match status" value="1"/>
</dbReference>
<dbReference type="Gene3D" id="1.10.150.20">
    <property type="entry name" value="5' to 3' exonuclease, C-terminal subdomain"/>
    <property type="match status" value="1"/>
</dbReference>
<dbReference type="Gene3D" id="3.40.1440.10">
    <property type="entry name" value="GIY-YIG endonuclease"/>
    <property type="match status" value="1"/>
</dbReference>
<dbReference type="Gene3D" id="4.10.860.10">
    <property type="entry name" value="UVR domain"/>
    <property type="match status" value="1"/>
</dbReference>
<dbReference type="Gene3D" id="3.30.420.340">
    <property type="entry name" value="UvrC, RNAse H endonuclease domain"/>
    <property type="match status" value="1"/>
</dbReference>
<dbReference type="HAMAP" id="MF_00203">
    <property type="entry name" value="UvrC"/>
    <property type="match status" value="1"/>
</dbReference>
<dbReference type="InterPro" id="IPR000305">
    <property type="entry name" value="GIY-YIG_endonuc"/>
</dbReference>
<dbReference type="InterPro" id="IPR035901">
    <property type="entry name" value="GIY-YIG_endonuc_sf"/>
</dbReference>
<dbReference type="InterPro" id="IPR047296">
    <property type="entry name" value="GIY-YIG_UvrC_Cho"/>
</dbReference>
<dbReference type="InterPro" id="IPR010994">
    <property type="entry name" value="RuvA_2-like"/>
</dbReference>
<dbReference type="InterPro" id="IPR001943">
    <property type="entry name" value="UVR_dom"/>
</dbReference>
<dbReference type="InterPro" id="IPR036876">
    <property type="entry name" value="UVR_dom_sf"/>
</dbReference>
<dbReference type="InterPro" id="IPR050066">
    <property type="entry name" value="UvrABC_protein_C"/>
</dbReference>
<dbReference type="InterPro" id="IPR004791">
    <property type="entry name" value="UvrC"/>
</dbReference>
<dbReference type="InterPro" id="IPR001162">
    <property type="entry name" value="UvrC_RNase_H_dom"/>
</dbReference>
<dbReference type="InterPro" id="IPR038476">
    <property type="entry name" value="UvrC_RNase_H_dom_sf"/>
</dbReference>
<dbReference type="NCBIfam" id="TIGR00194">
    <property type="entry name" value="uvrC"/>
    <property type="match status" value="1"/>
</dbReference>
<dbReference type="PANTHER" id="PTHR30562:SF1">
    <property type="entry name" value="UVRABC SYSTEM PROTEIN C"/>
    <property type="match status" value="1"/>
</dbReference>
<dbReference type="PANTHER" id="PTHR30562">
    <property type="entry name" value="UVRC/OXIDOREDUCTASE"/>
    <property type="match status" value="1"/>
</dbReference>
<dbReference type="Pfam" id="PF01541">
    <property type="entry name" value="GIY-YIG"/>
    <property type="match status" value="1"/>
</dbReference>
<dbReference type="Pfam" id="PF14520">
    <property type="entry name" value="HHH_5"/>
    <property type="match status" value="1"/>
</dbReference>
<dbReference type="Pfam" id="PF02151">
    <property type="entry name" value="UVR"/>
    <property type="match status" value="1"/>
</dbReference>
<dbReference type="Pfam" id="PF22920">
    <property type="entry name" value="UvrC_RNaseH"/>
    <property type="match status" value="1"/>
</dbReference>
<dbReference type="Pfam" id="PF08459">
    <property type="entry name" value="UvrC_RNaseH_dom"/>
    <property type="match status" value="1"/>
</dbReference>
<dbReference type="SMART" id="SM00465">
    <property type="entry name" value="GIYc"/>
    <property type="match status" value="1"/>
</dbReference>
<dbReference type="SUPFAM" id="SSF46600">
    <property type="entry name" value="C-terminal UvrC-binding domain of UvrB"/>
    <property type="match status" value="1"/>
</dbReference>
<dbReference type="SUPFAM" id="SSF82771">
    <property type="entry name" value="GIY-YIG endonuclease"/>
    <property type="match status" value="1"/>
</dbReference>
<dbReference type="SUPFAM" id="SSF47781">
    <property type="entry name" value="RuvA domain 2-like"/>
    <property type="match status" value="1"/>
</dbReference>
<dbReference type="PROSITE" id="PS50164">
    <property type="entry name" value="GIY_YIG"/>
    <property type="match status" value="1"/>
</dbReference>
<dbReference type="PROSITE" id="PS50151">
    <property type="entry name" value="UVR"/>
    <property type="match status" value="1"/>
</dbReference>
<dbReference type="PROSITE" id="PS50165">
    <property type="entry name" value="UVRC"/>
    <property type="match status" value="1"/>
</dbReference>
<evidence type="ECO:0000255" key="1">
    <source>
        <dbReference type="HAMAP-Rule" id="MF_00203"/>
    </source>
</evidence>
<reference key="1">
    <citation type="journal article" date="2006" name="Proc. Natl. Acad. Sci. U.S.A.">
        <title>Comparative genomics of the lactic acid bacteria.</title>
        <authorList>
            <person name="Makarova K.S."/>
            <person name="Slesarev A."/>
            <person name="Wolf Y.I."/>
            <person name="Sorokin A."/>
            <person name="Mirkin B."/>
            <person name="Koonin E.V."/>
            <person name="Pavlov A."/>
            <person name="Pavlova N."/>
            <person name="Karamychev V."/>
            <person name="Polouchine N."/>
            <person name="Shakhova V."/>
            <person name="Grigoriev I."/>
            <person name="Lou Y."/>
            <person name="Rohksar D."/>
            <person name="Lucas S."/>
            <person name="Huang K."/>
            <person name="Goodstein D.M."/>
            <person name="Hawkins T."/>
            <person name="Plengvidhya V."/>
            <person name="Welker D."/>
            <person name="Hughes J."/>
            <person name="Goh Y."/>
            <person name="Benson A."/>
            <person name="Baldwin K."/>
            <person name="Lee J.-H."/>
            <person name="Diaz-Muniz I."/>
            <person name="Dosti B."/>
            <person name="Smeianov V."/>
            <person name="Wechter W."/>
            <person name="Barabote R."/>
            <person name="Lorca G."/>
            <person name="Altermann E."/>
            <person name="Barrangou R."/>
            <person name="Ganesan B."/>
            <person name="Xie Y."/>
            <person name="Rawsthorne H."/>
            <person name="Tamir D."/>
            <person name="Parker C."/>
            <person name="Breidt F."/>
            <person name="Broadbent J.R."/>
            <person name="Hutkins R."/>
            <person name="O'Sullivan D."/>
            <person name="Steele J."/>
            <person name="Unlu G."/>
            <person name="Saier M.H. Jr."/>
            <person name="Klaenhammer T."/>
            <person name="Richardson P."/>
            <person name="Kozyavkin S."/>
            <person name="Weimer B.C."/>
            <person name="Mills D.A."/>
        </authorList>
    </citation>
    <scope>NUCLEOTIDE SEQUENCE [LARGE SCALE GENOMIC DNA]</scope>
    <source>
        <strain>ATCC 33323 / DSM 20243 / BCRC 14619 / CIP 102991 / JCM 1131 / KCTC 3163 / NCIMB 11718 / NCTC 13722 / AM63</strain>
    </source>
</reference>